<name>RL34_LACH4</name>
<protein>
    <recommendedName>
        <fullName evidence="1">Large ribosomal subunit protein bL34</fullName>
    </recommendedName>
    <alternativeName>
        <fullName evidence="3">50S ribosomal protein L34</fullName>
    </alternativeName>
</protein>
<comment type="similarity">
    <text evidence="1">Belongs to the bacterial ribosomal protein bL34 family.</text>
</comment>
<evidence type="ECO:0000255" key="1">
    <source>
        <dbReference type="HAMAP-Rule" id="MF_00391"/>
    </source>
</evidence>
<evidence type="ECO:0000256" key="2">
    <source>
        <dbReference type="SAM" id="MobiDB-lite"/>
    </source>
</evidence>
<evidence type="ECO:0000305" key="3"/>
<reference key="1">
    <citation type="journal article" date="2008" name="J. Bacteriol.">
        <title>Genome sequence of Lactobacillus helveticus: an organism distinguished by selective gene loss and IS element expansion.</title>
        <authorList>
            <person name="Callanan M."/>
            <person name="Kaleta P."/>
            <person name="O'Callaghan J."/>
            <person name="O'Sullivan O."/>
            <person name="Jordan K."/>
            <person name="McAuliffe O."/>
            <person name="Sangrador-Vegas A."/>
            <person name="Slattery L."/>
            <person name="Fitzgerald G.F."/>
            <person name="Beresford T."/>
            <person name="Ross R.P."/>
        </authorList>
    </citation>
    <scope>NUCLEOTIDE SEQUENCE [LARGE SCALE GENOMIC DNA]</scope>
    <source>
        <strain>DPC 4571</strain>
    </source>
</reference>
<proteinExistence type="inferred from homology"/>
<sequence length="46" mass="5456">MTTKRTYQPKKRHRSRVHGFMKRMSTSNGRKVLARRRAKGRKVLSA</sequence>
<organism>
    <name type="scientific">Lactobacillus helveticus (strain DPC 4571)</name>
    <dbReference type="NCBI Taxonomy" id="405566"/>
    <lineage>
        <taxon>Bacteria</taxon>
        <taxon>Bacillati</taxon>
        <taxon>Bacillota</taxon>
        <taxon>Bacilli</taxon>
        <taxon>Lactobacillales</taxon>
        <taxon>Lactobacillaceae</taxon>
        <taxon>Lactobacillus</taxon>
    </lineage>
</organism>
<feature type="chain" id="PRO_1000072218" description="Large ribosomal subunit protein bL34">
    <location>
        <begin position="1"/>
        <end position="46"/>
    </location>
</feature>
<feature type="region of interest" description="Disordered" evidence="2">
    <location>
        <begin position="24"/>
        <end position="46"/>
    </location>
</feature>
<feature type="compositionally biased region" description="Basic residues" evidence="2">
    <location>
        <begin position="32"/>
        <end position="46"/>
    </location>
</feature>
<gene>
    <name evidence="1" type="primary">rpmH</name>
    <name type="ordered locus">lhv_2107</name>
</gene>
<dbReference type="EMBL" id="CP000517">
    <property type="protein sequence ID" value="ABX27884.1"/>
    <property type="molecule type" value="Genomic_DNA"/>
</dbReference>
<dbReference type="RefSeq" id="WP_003549412.1">
    <property type="nucleotide sequence ID" value="NC_010080.1"/>
</dbReference>
<dbReference type="SMR" id="A8YTR0"/>
<dbReference type="GeneID" id="93290887"/>
<dbReference type="KEGG" id="lhe:lhv_2107"/>
<dbReference type="eggNOG" id="COG0230">
    <property type="taxonomic scope" value="Bacteria"/>
</dbReference>
<dbReference type="HOGENOM" id="CLU_129938_2_0_9"/>
<dbReference type="Proteomes" id="UP000000790">
    <property type="component" value="Chromosome"/>
</dbReference>
<dbReference type="GO" id="GO:1990904">
    <property type="term" value="C:ribonucleoprotein complex"/>
    <property type="evidence" value="ECO:0007669"/>
    <property type="project" value="UniProtKB-KW"/>
</dbReference>
<dbReference type="GO" id="GO:0005840">
    <property type="term" value="C:ribosome"/>
    <property type="evidence" value="ECO:0007669"/>
    <property type="project" value="UniProtKB-KW"/>
</dbReference>
<dbReference type="GO" id="GO:0003735">
    <property type="term" value="F:structural constituent of ribosome"/>
    <property type="evidence" value="ECO:0007669"/>
    <property type="project" value="InterPro"/>
</dbReference>
<dbReference type="GO" id="GO:0006412">
    <property type="term" value="P:translation"/>
    <property type="evidence" value="ECO:0007669"/>
    <property type="project" value="UniProtKB-UniRule"/>
</dbReference>
<dbReference type="FunFam" id="1.10.287.3980:FF:000001">
    <property type="entry name" value="Mitochondrial ribosomal protein L34"/>
    <property type="match status" value="1"/>
</dbReference>
<dbReference type="Gene3D" id="1.10.287.3980">
    <property type="match status" value="1"/>
</dbReference>
<dbReference type="HAMAP" id="MF_00391">
    <property type="entry name" value="Ribosomal_bL34"/>
    <property type="match status" value="1"/>
</dbReference>
<dbReference type="InterPro" id="IPR000271">
    <property type="entry name" value="Ribosomal_bL34"/>
</dbReference>
<dbReference type="InterPro" id="IPR020939">
    <property type="entry name" value="Ribosomal_bL34_CS"/>
</dbReference>
<dbReference type="NCBIfam" id="TIGR01030">
    <property type="entry name" value="rpmH_bact"/>
    <property type="match status" value="1"/>
</dbReference>
<dbReference type="PANTHER" id="PTHR14503:SF4">
    <property type="entry name" value="LARGE RIBOSOMAL SUBUNIT PROTEIN BL34M"/>
    <property type="match status" value="1"/>
</dbReference>
<dbReference type="PANTHER" id="PTHR14503">
    <property type="entry name" value="MITOCHONDRIAL RIBOSOMAL PROTEIN 34 FAMILY MEMBER"/>
    <property type="match status" value="1"/>
</dbReference>
<dbReference type="Pfam" id="PF00468">
    <property type="entry name" value="Ribosomal_L34"/>
    <property type="match status" value="1"/>
</dbReference>
<dbReference type="PROSITE" id="PS00784">
    <property type="entry name" value="RIBOSOMAL_L34"/>
    <property type="match status" value="1"/>
</dbReference>
<accession>A8YTR0</accession>
<keyword id="KW-0687">Ribonucleoprotein</keyword>
<keyword id="KW-0689">Ribosomal protein</keyword>